<dbReference type="EMBL" id="CR380958">
    <property type="protein sequence ID" value="CAG61813.1"/>
    <property type="molecule type" value="Genomic_DNA"/>
</dbReference>
<dbReference type="RefSeq" id="XP_448843.1">
    <property type="nucleotide sequence ID" value="XM_448843.1"/>
</dbReference>
<dbReference type="FunCoup" id="Q6FLQ1">
    <property type="interactions" value="48"/>
</dbReference>
<dbReference type="STRING" id="284593.Q6FLQ1"/>
<dbReference type="EnsemblFungi" id="CAGL0L01683g-T">
    <property type="protein sequence ID" value="CAGL0L01683g-T-p1"/>
    <property type="gene ID" value="CAGL0L01683g"/>
</dbReference>
<dbReference type="KEGG" id="cgr:2890887"/>
<dbReference type="CGD" id="CAL0135632">
    <property type="gene designation" value="CAGL0L01683g"/>
</dbReference>
<dbReference type="VEuPathDB" id="FungiDB:B1J91_L01683g"/>
<dbReference type="VEuPathDB" id="FungiDB:CAGL0L01683g"/>
<dbReference type="HOGENOM" id="CLU_168467_0_0_1"/>
<dbReference type="InParanoid" id="Q6FLQ1"/>
<dbReference type="OMA" id="AVANHEW"/>
<dbReference type="Proteomes" id="UP000002428">
    <property type="component" value="Chromosome L"/>
</dbReference>
<dbReference type="GO" id="GO:0005768">
    <property type="term" value="C:endosome"/>
    <property type="evidence" value="ECO:0007669"/>
    <property type="project" value="UniProtKB-SubCell"/>
</dbReference>
<dbReference type="InterPro" id="IPR020491">
    <property type="entry name" value="BLI1"/>
</dbReference>
<dbReference type="Pfam" id="PF17324">
    <property type="entry name" value="BLI1"/>
    <property type="match status" value="1"/>
</dbReference>
<gene>
    <name type="primary">BLI1</name>
    <name type="ordered locus">CAGL0L01683g</name>
</gene>
<accession>Q6FLQ1</accession>
<evidence type="ECO:0000250" key="1"/>
<evidence type="ECO:0000255" key="2"/>
<evidence type="ECO:0000305" key="3"/>
<comment type="function">
    <text evidence="1">Component of the biogenesis of lysosome-related organelles complex-1 (BLOC-1) involved in endosomal cargo sorting.</text>
</comment>
<comment type="subunit">
    <text evidence="1">Component of the biogenesis of lysosome-related organelles complex-1 (BLOC-1).</text>
</comment>
<comment type="subcellular location">
    <subcellularLocation>
        <location evidence="1">Endosome</location>
    </subcellularLocation>
</comment>
<comment type="similarity">
    <text evidence="3">Belongs to the BLI1 family.</text>
</comment>
<keyword id="KW-0175">Coiled coil</keyword>
<keyword id="KW-0967">Endosome</keyword>
<keyword id="KW-1185">Reference proteome</keyword>
<keyword id="KW-0813">Transport</keyword>
<name>BLI1_CANGA</name>
<sequence length="103" mass="12217">MIKQDVQKCVDALQDFVDKEIGESVNLFSCKSRANNELLLNIDEKFQLKDKDELHQLGEQKIENQNKLQEIRNKVEYYEKLLTELEEAQKELEVRYKLVSKSK</sequence>
<reference key="1">
    <citation type="journal article" date="2004" name="Nature">
        <title>Genome evolution in yeasts.</title>
        <authorList>
            <person name="Dujon B."/>
            <person name="Sherman D."/>
            <person name="Fischer G."/>
            <person name="Durrens P."/>
            <person name="Casaregola S."/>
            <person name="Lafontaine I."/>
            <person name="de Montigny J."/>
            <person name="Marck C."/>
            <person name="Neuveglise C."/>
            <person name="Talla E."/>
            <person name="Goffard N."/>
            <person name="Frangeul L."/>
            <person name="Aigle M."/>
            <person name="Anthouard V."/>
            <person name="Babour A."/>
            <person name="Barbe V."/>
            <person name="Barnay S."/>
            <person name="Blanchin S."/>
            <person name="Beckerich J.-M."/>
            <person name="Beyne E."/>
            <person name="Bleykasten C."/>
            <person name="Boisrame A."/>
            <person name="Boyer J."/>
            <person name="Cattolico L."/>
            <person name="Confanioleri F."/>
            <person name="de Daruvar A."/>
            <person name="Despons L."/>
            <person name="Fabre E."/>
            <person name="Fairhead C."/>
            <person name="Ferry-Dumazet H."/>
            <person name="Groppi A."/>
            <person name="Hantraye F."/>
            <person name="Hennequin C."/>
            <person name="Jauniaux N."/>
            <person name="Joyet P."/>
            <person name="Kachouri R."/>
            <person name="Kerrest A."/>
            <person name="Koszul R."/>
            <person name="Lemaire M."/>
            <person name="Lesur I."/>
            <person name="Ma L."/>
            <person name="Muller H."/>
            <person name="Nicaud J.-M."/>
            <person name="Nikolski M."/>
            <person name="Oztas S."/>
            <person name="Ozier-Kalogeropoulos O."/>
            <person name="Pellenz S."/>
            <person name="Potier S."/>
            <person name="Richard G.-F."/>
            <person name="Straub M.-L."/>
            <person name="Suleau A."/>
            <person name="Swennen D."/>
            <person name="Tekaia F."/>
            <person name="Wesolowski-Louvel M."/>
            <person name="Westhof E."/>
            <person name="Wirth B."/>
            <person name="Zeniou-Meyer M."/>
            <person name="Zivanovic Y."/>
            <person name="Bolotin-Fukuhara M."/>
            <person name="Thierry A."/>
            <person name="Bouchier C."/>
            <person name="Caudron B."/>
            <person name="Scarpelli C."/>
            <person name="Gaillardin C."/>
            <person name="Weissenbach J."/>
            <person name="Wincker P."/>
            <person name="Souciet J.-L."/>
        </authorList>
    </citation>
    <scope>NUCLEOTIDE SEQUENCE [LARGE SCALE GENOMIC DNA]</scope>
    <source>
        <strain>ATCC 2001 / BCRC 20586 / JCM 3761 / NBRC 0622 / NRRL Y-65 / CBS 138</strain>
    </source>
</reference>
<proteinExistence type="inferred from homology"/>
<organism>
    <name type="scientific">Candida glabrata (strain ATCC 2001 / BCRC 20586 / JCM 3761 / NBRC 0622 / NRRL Y-65 / CBS 138)</name>
    <name type="common">Yeast</name>
    <name type="synonym">Nakaseomyces glabratus</name>
    <dbReference type="NCBI Taxonomy" id="284593"/>
    <lineage>
        <taxon>Eukaryota</taxon>
        <taxon>Fungi</taxon>
        <taxon>Dikarya</taxon>
        <taxon>Ascomycota</taxon>
        <taxon>Saccharomycotina</taxon>
        <taxon>Saccharomycetes</taxon>
        <taxon>Saccharomycetales</taxon>
        <taxon>Saccharomycetaceae</taxon>
        <taxon>Nakaseomyces</taxon>
    </lineage>
</organism>
<protein>
    <recommendedName>
        <fullName>Biogenesis of lysosome-related organelles complex 1 subunit BLI1</fullName>
        <shortName>BLOC-1 subunit BLI1</shortName>
    </recommendedName>
    <alternativeName>
        <fullName>BLOC-1 interactor 1</fullName>
    </alternativeName>
</protein>
<feature type="chain" id="PRO_0000410613" description="Biogenesis of lysosome-related organelles complex 1 subunit BLI1">
    <location>
        <begin position="1"/>
        <end position="103"/>
    </location>
</feature>
<feature type="coiled-coil region" evidence="2">
    <location>
        <begin position="51"/>
        <end position="102"/>
    </location>
</feature>